<comment type="function">
    <text evidence="1">Together with its co-chaperonin GroES, plays an essential role in assisting protein folding. The GroEL-GroES system forms a nano-cage that allows encapsulation of the non-native substrate proteins and provides a physical environment optimized to promote and accelerate protein folding.</text>
</comment>
<comment type="catalytic activity">
    <reaction evidence="1">
        <text>ATP + H2O + a folded polypeptide = ADP + phosphate + an unfolded polypeptide.</text>
        <dbReference type="EC" id="5.6.1.7"/>
    </reaction>
</comment>
<comment type="subunit">
    <text evidence="1">Forms a cylinder of 14 subunits composed of two heptameric rings stacked back-to-back. Interacts with the co-chaperonin GroES.</text>
</comment>
<comment type="subcellular location">
    <subcellularLocation>
        <location evidence="1">Cytoplasm</location>
    </subcellularLocation>
</comment>
<comment type="similarity">
    <text evidence="1">Belongs to the chaperonin (HSP60) family.</text>
</comment>
<dbReference type="EC" id="5.6.1.7" evidence="1"/>
<dbReference type="EMBL" id="CP000890">
    <property type="protein sequence ID" value="ABX77958.1"/>
    <property type="molecule type" value="Genomic_DNA"/>
</dbReference>
<dbReference type="RefSeq" id="WP_012220765.1">
    <property type="nucleotide sequence ID" value="NC_010117.1"/>
</dbReference>
<dbReference type="SMR" id="A9NA82"/>
<dbReference type="KEGG" id="cbs:COXBURSA331_A1908"/>
<dbReference type="HOGENOM" id="CLU_016503_3_0_6"/>
<dbReference type="GO" id="GO:0005737">
    <property type="term" value="C:cytoplasm"/>
    <property type="evidence" value="ECO:0007669"/>
    <property type="project" value="UniProtKB-SubCell"/>
</dbReference>
<dbReference type="GO" id="GO:0005524">
    <property type="term" value="F:ATP binding"/>
    <property type="evidence" value="ECO:0007669"/>
    <property type="project" value="UniProtKB-UniRule"/>
</dbReference>
<dbReference type="GO" id="GO:0140662">
    <property type="term" value="F:ATP-dependent protein folding chaperone"/>
    <property type="evidence" value="ECO:0007669"/>
    <property type="project" value="InterPro"/>
</dbReference>
<dbReference type="GO" id="GO:0016853">
    <property type="term" value="F:isomerase activity"/>
    <property type="evidence" value="ECO:0007669"/>
    <property type="project" value="UniProtKB-KW"/>
</dbReference>
<dbReference type="GO" id="GO:0051082">
    <property type="term" value="F:unfolded protein binding"/>
    <property type="evidence" value="ECO:0007669"/>
    <property type="project" value="UniProtKB-UniRule"/>
</dbReference>
<dbReference type="GO" id="GO:0042026">
    <property type="term" value="P:protein refolding"/>
    <property type="evidence" value="ECO:0007669"/>
    <property type="project" value="UniProtKB-UniRule"/>
</dbReference>
<dbReference type="CDD" id="cd03344">
    <property type="entry name" value="GroEL"/>
    <property type="match status" value="1"/>
</dbReference>
<dbReference type="FunFam" id="1.10.560.10:FF:000001">
    <property type="entry name" value="60 kDa chaperonin"/>
    <property type="match status" value="1"/>
</dbReference>
<dbReference type="FunFam" id="3.50.7.10:FF:000001">
    <property type="entry name" value="60 kDa chaperonin"/>
    <property type="match status" value="1"/>
</dbReference>
<dbReference type="Gene3D" id="3.50.7.10">
    <property type="entry name" value="GroEL"/>
    <property type="match status" value="1"/>
</dbReference>
<dbReference type="Gene3D" id="1.10.560.10">
    <property type="entry name" value="GroEL-like equatorial domain"/>
    <property type="match status" value="1"/>
</dbReference>
<dbReference type="Gene3D" id="3.30.260.10">
    <property type="entry name" value="TCP-1-like chaperonin intermediate domain"/>
    <property type="match status" value="1"/>
</dbReference>
<dbReference type="HAMAP" id="MF_00600">
    <property type="entry name" value="CH60"/>
    <property type="match status" value="1"/>
</dbReference>
<dbReference type="InterPro" id="IPR018370">
    <property type="entry name" value="Chaperonin_Cpn60_CS"/>
</dbReference>
<dbReference type="InterPro" id="IPR001844">
    <property type="entry name" value="Cpn60/GroEL"/>
</dbReference>
<dbReference type="InterPro" id="IPR002423">
    <property type="entry name" value="Cpn60/GroEL/TCP-1"/>
</dbReference>
<dbReference type="InterPro" id="IPR027409">
    <property type="entry name" value="GroEL-like_apical_dom_sf"/>
</dbReference>
<dbReference type="InterPro" id="IPR027413">
    <property type="entry name" value="GROEL-like_equatorial_sf"/>
</dbReference>
<dbReference type="InterPro" id="IPR027410">
    <property type="entry name" value="TCP-1-like_intermed_sf"/>
</dbReference>
<dbReference type="NCBIfam" id="TIGR02348">
    <property type="entry name" value="GroEL"/>
    <property type="match status" value="1"/>
</dbReference>
<dbReference type="NCBIfam" id="NF000592">
    <property type="entry name" value="PRK00013.1"/>
    <property type="match status" value="1"/>
</dbReference>
<dbReference type="NCBIfam" id="NF009487">
    <property type="entry name" value="PRK12849.1"/>
    <property type="match status" value="1"/>
</dbReference>
<dbReference type="NCBIfam" id="NF009488">
    <property type="entry name" value="PRK12850.1"/>
    <property type="match status" value="1"/>
</dbReference>
<dbReference type="NCBIfam" id="NF009489">
    <property type="entry name" value="PRK12851.1"/>
    <property type="match status" value="1"/>
</dbReference>
<dbReference type="PANTHER" id="PTHR45633">
    <property type="entry name" value="60 KDA HEAT SHOCK PROTEIN, MITOCHONDRIAL"/>
    <property type="match status" value="1"/>
</dbReference>
<dbReference type="Pfam" id="PF00118">
    <property type="entry name" value="Cpn60_TCP1"/>
    <property type="match status" value="1"/>
</dbReference>
<dbReference type="PRINTS" id="PR00298">
    <property type="entry name" value="CHAPERONIN60"/>
</dbReference>
<dbReference type="SUPFAM" id="SSF52029">
    <property type="entry name" value="GroEL apical domain-like"/>
    <property type="match status" value="1"/>
</dbReference>
<dbReference type="SUPFAM" id="SSF48592">
    <property type="entry name" value="GroEL equatorial domain-like"/>
    <property type="match status" value="1"/>
</dbReference>
<dbReference type="SUPFAM" id="SSF54849">
    <property type="entry name" value="GroEL-intermediate domain like"/>
    <property type="match status" value="1"/>
</dbReference>
<dbReference type="PROSITE" id="PS00296">
    <property type="entry name" value="CHAPERONINS_CPN60"/>
    <property type="match status" value="1"/>
</dbReference>
<accession>A9NA82</accession>
<evidence type="ECO:0000255" key="1">
    <source>
        <dbReference type="HAMAP-Rule" id="MF_00600"/>
    </source>
</evidence>
<reference key="1">
    <citation type="submission" date="2007-11" db="EMBL/GenBank/DDBJ databases">
        <title>Genome sequencing of phylogenetically and phenotypically diverse Coxiella burnetii isolates.</title>
        <authorList>
            <person name="Seshadri R."/>
            <person name="Samuel J.E."/>
        </authorList>
    </citation>
    <scope>NUCLEOTIDE SEQUENCE [LARGE SCALE GENOMIC DNA]</scope>
    <source>
        <strain>RSA 331 / Henzerling II</strain>
    </source>
</reference>
<organism>
    <name type="scientific">Coxiella burnetii (strain RSA 331 / Henzerling II)</name>
    <dbReference type="NCBI Taxonomy" id="360115"/>
    <lineage>
        <taxon>Bacteria</taxon>
        <taxon>Pseudomonadati</taxon>
        <taxon>Pseudomonadota</taxon>
        <taxon>Gammaproteobacteria</taxon>
        <taxon>Legionellales</taxon>
        <taxon>Coxiellaceae</taxon>
        <taxon>Coxiella</taxon>
    </lineage>
</organism>
<proteinExistence type="inferred from homology"/>
<feature type="chain" id="PRO_1000082471" description="Chaperonin GroEL">
    <location>
        <begin position="1"/>
        <end position="552"/>
    </location>
</feature>
<feature type="binding site" evidence="1">
    <location>
        <begin position="30"/>
        <end position="33"/>
    </location>
    <ligand>
        <name>ATP</name>
        <dbReference type="ChEBI" id="CHEBI:30616"/>
    </ligand>
</feature>
<feature type="binding site" evidence="1">
    <location>
        <position position="51"/>
    </location>
    <ligand>
        <name>ATP</name>
        <dbReference type="ChEBI" id="CHEBI:30616"/>
    </ligand>
</feature>
<feature type="binding site" evidence="1">
    <location>
        <begin position="87"/>
        <end position="91"/>
    </location>
    <ligand>
        <name>ATP</name>
        <dbReference type="ChEBI" id="CHEBI:30616"/>
    </ligand>
</feature>
<feature type="binding site" evidence="1">
    <location>
        <position position="415"/>
    </location>
    <ligand>
        <name>ATP</name>
        <dbReference type="ChEBI" id="CHEBI:30616"/>
    </ligand>
</feature>
<feature type="binding site" evidence="1">
    <location>
        <begin position="480"/>
        <end position="482"/>
    </location>
    <ligand>
        <name>ATP</name>
        <dbReference type="ChEBI" id="CHEBI:30616"/>
    </ligand>
</feature>
<feature type="binding site" evidence="1">
    <location>
        <position position="496"/>
    </location>
    <ligand>
        <name>ATP</name>
        <dbReference type="ChEBI" id="CHEBI:30616"/>
    </ligand>
</feature>
<name>CH60_COXBR</name>
<protein>
    <recommendedName>
        <fullName evidence="1">Chaperonin GroEL</fullName>
        <ecNumber evidence="1">5.6.1.7</ecNumber>
    </recommendedName>
    <alternativeName>
        <fullName evidence="1">60 kDa chaperonin</fullName>
    </alternativeName>
    <alternativeName>
        <fullName evidence="1">Chaperonin-60</fullName>
        <shortName evidence="1">Cpn60</shortName>
    </alternativeName>
</protein>
<gene>
    <name evidence="1" type="primary">groEL</name>
    <name evidence="1" type="synonym">groL</name>
    <name type="ordered locus">COXBURSA331_A1908</name>
</gene>
<sequence>MAAKVLKFSHEVLHAMSRGVEVLANAVKVTLGPKGRNVVLDKSFGAPTITKDGVSVAKEIELEDKFENMGAQMVKEVASRTSDDAGDGTTTATVLAQAILVEGIKAVIAGMNPMDLKRGIDKAVTAAVAELKKISKPCKDQKAIAQVGTISANSDKSIGDIIAEAMEKVGKEGVITVEDGSGLENALEVVEGMQFDRGYLSPYFINNQQNMSAELENPFILLVDKKISNIRELIPLLENIAKSGRPLLVIAEDIEGEALATLVVNNIRGVVKVAAVKAPGFGDRRKAMLQDIAVLTGGKVISEEVGLSLEAASLDDLGSAKRVVVTKDDTTIIDGSGDAGDIKNRVEQIRKEIENSSSDYDKEKLQERLAKLAGGVAVIKVGAATEVEMKEKKARVEDALHATRAAVEEGVVPGGGVALIRVLKSLDSVEVENEDQRVGVEIARRAMAYPLSQIVKNTGVQAAVVADKVLNHKDVNYGYNAATGEYGDMIEMGILDPTKVTRTALQNAASIAGLMITTECMVTEAPKKKEESMPGGGDMGGMGGMGGMGGMM</sequence>
<keyword id="KW-0067">ATP-binding</keyword>
<keyword id="KW-0143">Chaperone</keyword>
<keyword id="KW-0963">Cytoplasm</keyword>
<keyword id="KW-0413">Isomerase</keyword>
<keyword id="KW-0547">Nucleotide-binding</keyword>